<reference key="1">
    <citation type="journal article" date="2002" name="Genome Res.">
        <title>The genome of Methanosarcina acetivorans reveals extensive metabolic and physiological diversity.</title>
        <authorList>
            <person name="Galagan J.E."/>
            <person name="Nusbaum C."/>
            <person name="Roy A."/>
            <person name="Endrizzi M.G."/>
            <person name="Macdonald P."/>
            <person name="FitzHugh W."/>
            <person name="Calvo S."/>
            <person name="Engels R."/>
            <person name="Smirnov S."/>
            <person name="Atnoor D."/>
            <person name="Brown A."/>
            <person name="Allen N."/>
            <person name="Naylor J."/>
            <person name="Stange-Thomann N."/>
            <person name="DeArellano K."/>
            <person name="Johnson R."/>
            <person name="Linton L."/>
            <person name="McEwan P."/>
            <person name="McKernan K."/>
            <person name="Talamas J."/>
            <person name="Tirrell A."/>
            <person name="Ye W."/>
            <person name="Zimmer A."/>
            <person name="Barber R.D."/>
            <person name="Cann I."/>
            <person name="Graham D.E."/>
            <person name="Grahame D.A."/>
            <person name="Guss A.M."/>
            <person name="Hedderich R."/>
            <person name="Ingram-Smith C."/>
            <person name="Kuettner H.C."/>
            <person name="Krzycki J.A."/>
            <person name="Leigh J.A."/>
            <person name="Li W."/>
            <person name="Liu J."/>
            <person name="Mukhopadhyay B."/>
            <person name="Reeve J.N."/>
            <person name="Smith K."/>
            <person name="Springer T.A."/>
            <person name="Umayam L.A."/>
            <person name="White O."/>
            <person name="White R.H."/>
            <person name="de Macario E.C."/>
            <person name="Ferry J.G."/>
            <person name="Jarrell K.F."/>
            <person name="Jing H."/>
            <person name="Macario A.J.L."/>
            <person name="Paulsen I.T."/>
            <person name="Pritchett M."/>
            <person name="Sowers K.R."/>
            <person name="Swanson R.V."/>
            <person name="Zinder S.H."/>
            <person name="Lander E."/>
            <person name="Metcalf W.W."/>
            <person name="Birren B."/>
        </authorList>
    </citation>
    <scope>NUCLEOTIDE SEQUENCE [LARGE SCALE GENOMIC DNA]</scope>
    <source>
        <strain>ATCC 35395 / DSM 2834 / JCM 12185 / C2A</strain>
    </source>
</reference>
<keyword id="KW-0456">Lyase</keyword>
<keyword id="KW-0460">Magnesium</keyword>
<keyword id="KW-0464">Manganese</keyword>
<keyword id="KW-0479">Metal-binding</keyword>
<keyword id="KW-1185">Reference proteome</keyword>
<keyword id="KW-0686">Riboflavin biosynthesis</keyword>
<gene>
    <name evidence="1" type="primary">ribB</name>
    <name type="ordered locus">MA_0548</name>
</gene>
<feature type="chain" id="PRO_0000151824" description="3,4-dihydroxy-2-butanone 4-phosphate synthase">
    <location>
        <begin position="1"/>
        <end position="247"/>
    </location>
</feature>
<feature type="binding site" evidence="1">
    <location>
        <begin position="38"/>
        <end position="39"/>
    </location>
    <ligand>
        <name>D-ribulose 5-phosphate</name>
        <dbReference type="ChEBI" id="CHEBI:58121"/>
    </ligand>
</feature>
<feature type="binding site" evidence="1">
    <location>
        <position position="39"/>
    </location>
    <ligand>
        <name>Mg(2+)</name>
        <dbReference type="ChEBI" id="CHEBI:18420"/>
        <label>1</label>
    </ligand>
</feature>
<feature type="binding site" evidence="1">
    <location>
        <position position="39"/>
    </location>
    <ligand>
        <name>Mg(2+)</name>
        <dbReference type="ChEBI" id="CHEBI:18420"/>
        <label>2</label>
    </ligand>
</feature>
<feature type="binding site" evidence="1">
    <location>
        <position position="43"/>
    </location>
    <ligand>
        <name>D-ribulose 5-phosphate</name>
        <dbReference type="ChEBI" id="CHEBI:58121"/>
    </ligand>
</feature>
<feature type="binding site" evidence="1">
    <location>
        <begin position="179"/>
        <end position="183"/>
    </location>
    <ligand>
        <name>D-ribulose 5-phosphate</name>
        <dbReference type="ChEBI" id="CHEBI:58121"/>
    </ligand>
</feature>
<feature type="binding site" evidence="1">
    <location>
        <position position="203"/>
    </location>
    <ligand>
        <name>D-ribulose 5-phosphate</name>
        <dbReference type="ChEBI" id="CHEBI:58121"/>
    </ligand>
</feature>
<feature type="site" description="Essential for catalytic activity" evidence="1">
    <location>
        <position position="165"/>
    </location>
</feature>
<feature type="site" description="Essential for catalytic activity" evidence="1">
    <location>
        <position position="203"/>
    </location>
</feature>
<sequence>MNESTVYECLKYGNENINRALEVLRAGKMIQIYDSDSREGETDLVIPAKAVTYKDVKWMRKDAGGLICVAVDPVASKQLKLPFMADLVREASRTSESLGEVVEKDGDLKYDSHSSFSIWVNHRDTRTGIPDLERALTIRKIGEITEKSLSGNGIRFGNEFRTPGHVALLRAAEGLLDERMGQTELSVALARMAGITPAMVVCEMLDDESGRALSKENSKDYGKDHGLVFLEGQEILEAYMLWTGSEC</sequence>
<protein>
    <recommendedName>
        <fullName evidence="1">3,4-dihydroxy-2-butanone 4-phosphate synthase</fullName>
        <shortName evidence="1">DHBP synthase</shortName>
        <ecNumber evidence="1">4.1.99.12</ecNumber>
    </recommendedName>
</protein>
<name>RIBB_METAC</name>
<proteinExistence type="inferred from homology"/>
<evidence type="ECO:0000255" key="1">
    <source>
        <dbReference type="HAMAP-Rule" id="MF_00180"/>
    </source>
</evidence>
<comment type="function">
    <text evidence="1">Catalyzes the conversion of D-ribulose 5-phosphate to formate and 3,4-dihydroxy-2-butanone 4-phosphate.</text>
</comment>
<comment type="catalytic activity">
    <reaction evidence="1">
        <text>D-ribulose 5-phosphate = (2S)-2-hydroxy-3-oxobutyl phosphate + formate + H(+)</text>
        <dbReference type="Rhea" id="RHEA:18457"/>
        <dbReference type="ChEBI" id="CHEBI:15378"/>
        <dbReference type="ChEBI" id="CHEBI:15740"/>
        <dbReference type="ChEBI" id="CHEBI:58121"/>
        <dbReference type="ChEBI" id="CHEBI:58830"/>
        <dbReference type="EC" id="4.1.99.12"/>
    </reaction>
</comment>
<comment type="cofactor">
    <cofactor evidence="1">
        <name>Mg(2+)</name>
        <dbReference type="ChEBI" id="CHEBI:18420"/>
    </cofactor>
    <cofactor evidence="1">
        <name>Mn(2+)</name>
        <dbReference type="ChEBI" id="CHEBI:29035"/>
    </cofactor>
    <text evidence="1">Binds 2 divalent metal cations per subunit. Magnesium or manganese.</text>
</comment>
<comment type="pathway">
    <text evidence="1">Cofactor biosynthesis; riboflavin biosynthesis; 2-hydroxy-3-oxobutyl phosphate from D-ribulose 5-phosphate: step 1/1.</text>
</comment>
<comment type="subunit">
    <text evidence="1">Homodimer.</text>
</comment>
<comment type="similarity">
    <text evidence="1">Belongs to the DHBP synthase family.</text>
</comment>
<dbReference type="EC" id="4.1.99.12" evidence="1"/>
<dbReference type="EMBL" id="AE010299">
    <property type="protein sequence ID" value="AAM03992.1"/>
    <property type="molecule type" value="Genomic_DNA"/>
</dbReference>
<dbReference type="RefSeq" id="WP_011020597.1">
    <property type="nucleotide sequence ID" value="NC_003552.1"/>
</dbReference>
<dbReference type="SMR" id="Q8TT89"/>
<dbReference type="FunCoup" id="Q8TT89">
    <property type="interactions" value="101"/>
</dbReference>
<dbReference type="STRING" id="188937.MA_0548"/>
<dbReference type="EnsemblBacteria" id="AAM03992">
    <property type="protein sequence ID" value="AAM03992"/>
    <property type="gene ID" value="MA_0548"/>
</dbReference>
<dbReference type="GeneID" id="1472440"/>
<dbReference type="KEGG" id="mac:MA_0548"/>
<dbReference type="HOGENOM" id="CLU_020273_3_2_2"/>
<dbReference type="InParanoid" id="Q8TT89"/>
<dbReference type="OrthoDB" id="25735at2157"/>
<dbReference type="PhylomeDB" id="Q8TT89"/>
<dbReference type="UniPathway" id="UPA00275">
    <property type="reaction ID" value="UER00399"/>
</dbReference>
<dbReference type="Proteomes" id="UP000002487">
    <property type="component" value="Chromosome"/>
</dbReference>
<dbReference type="GO" id="GO:0005829">
    <property type="term" value="C:cytosol"/>
    <property type="evidence" value="ECO:0000318"/>
    <property type="project" value="GO_Central"/>
</dbReference>
<dbReference type="GO" id="GO:0008686">
    <property type="term" value="F:3,4-dihydroxy-2-butanone-4-phosphate synthase activity"/>
    <property type="evidence" value="ECO:0000318"/>
    <property type="project" value="GO_Central"/>
</dbReference>
<dbReference type="GO" id="GO:0000287">
    <property type="term" value="F:magnesium ion binding"/>
    <property type="evidence" value="ECO:0007669"/>
    <property type="project" value="UniProtKB-UniRule"/>
</dbReference>
<dbReference type="GO" id="GO:0030145">
    <property type="term" value="F:manganese ion binding"/>
    <property type="evidence" value="ECO:0007669"/>
    <property type="project" value="UniProtKB-UniRule"/>
</dbReference>
<dbReference type="GO" id="GO:0009231">
    <property type="term" value="P:riboflavin biosynthetic process"/>
    <property type="evidence" value="ECO:0000318"/>
    <property type="project" value="GO_Central"/>
</dbReference>
<dbReference type="FunFam" id="3.90.870.10:FF:000012">
    <property type="entry name" value="3,4-dihydroxy-2-butanone 4-phosphate synthase"/>
    <property type="match status" value="1"/>
</dbReference>
<dbReference type="Gene3D" id="3.90.870.10">
    <property type="entry name" value="DHBP synthase"/>
    <property type="match status" value="1"/>
</dbReference>
<dbReference type="HAMAP" id="MF_00180">
    <property type="entry name" value="RibB"/>
    <property type="match status" value="1"/>
</dbReference>
<dbReference type="InterPro" id="IPR017945">
    <property type="entry name" value="DHBP_synth_RibB-like_a/b_dom"/>
</dbReference>
<dbReference type="InterPro" id="IPR000422">
    <property type="entry name" value="DHBP_synthase_RibB"/>
</dbReference>
<dbReference type="NCBIfam" id="TIGR00506">
    <property type="entry name" value="ribB"/>
    <property type="match status" value="1"/>
</dbReference>
<dbReference type="PANTHER" id="PTHR21327:SF46">
    <property type="entry name" value="3,4-DIHYDROXY-2-BUTANONE 4-PHOSPHATE SYNTHASE"/>
    <property type="match status" value="1"/>
</dbReference>
<dbReference type="PANTHER" id="PTHR21327">
    <property type="entry name" value="GTP CYCLOHYDROLASE II-RELATED"/>
    <property type="match status" value="1"/>
</dbReference>
<dbReference type="Pfam" id="PF00926">
    <property type="entry name" value="DHBP_synthase"/>
    <property type="match status" value="1"/>
</dbReference>
<dbReference type="SUPFAM" id="SSF55821">
    <property type="entry name" value="YrdC/RibB"/>
    <property type="match status" value="1"/>
</dbReference>
<accession>Q8TT89</accession>
<organism>
    <name type="scientific">Methanosarcina acetivorans (strain ATCC 35395 / DSM 2834 / JCM 12185 / C2A)</name>
    <dbReference type="NCBI Taxonomy" id="188937"/>
    <lineage>
        <taxon>Archaea</taxon>
        <taxon>Methanobacteriati</taxon>
        <taxon>Methanobacteriota</taxon>
        <taxon>Stenosarchaea group</taxon>
        <taxon>Methanomicrobia</taxon>
        <taxon>Methanosarcinales</taxon>
        <taxon>Methanosarcinaceae</taxon>
        <taxon>Methanosarcina</taxon>
    </lineage>
</organism>